<reference key="1">
    <citation type="journal article" date="2011" name="J. Bacteriol.">
        <title>Complete genome sequence and updated annotation of Desulfovibrio alaskensis G20.</title>
        <authorList>
            <person name="Hauser L.J."/>
            <person name="Land M.L."/>
            <person name="Brown S.D."/>
            <person name="Larimer F."/>
            <person name="Keller K.L."/>
            <person name="Rapp-Giles B.J."/>
            <person name="Price M.N."/>
            <person name="Lin M."/>
            <person name="Bruce D.C."/>
            <person name="Detter J.C."/>
            <person name="Tapia R."/>
            <person name="Han C.S."/>
            <person name="Goodwin L.A."/>
            <person name="Cheng J.F."/>
            <person name="Pitluck S."/>
            <person name="Copeland A."/>
            <person name="Lucas S."/>
            <person name="Nolan M."/>
            <person name="Lapidus A.L."/>
            <person name="Palumbo A.V."/>
            <person name="Wall J.D."/>
        </authorList>
    </citation>
    <scope>NUCLEOTIDE SEQUENCE [LARGE SCALE GENOMIC DNA]</scope>
    <source>
        <strain>ATCC BAA-1058 / DSM 17464 / G20</strain>
    </source>
</reference>
<proteinExistence type="inferred from homology"/>
<accession>Q30VD9</accession>
<organism>
    <name type="scientific">Oleidesulfovibrio alaskensis (strain ATCC BAA-1058 / DSM 17464 / G20)</name>
    <name type="common">Desulfovibrio alaskensis</name>
    <dbReference type="NCBI Taxonomy" id="207559"/>
    <lineage>
        <taxon>Bacteria</taxon>
        <taxon>Pseudomonadati</taxon>
        <taxon>Thermodesulfobacteriota</taxon>
        <taxon>Desulfovibrionia</taxon>
        <taxon>Desulfovibrionales</taxon>
        <taxon>Desulfovibrionaceae</taxon>
        <taxon>Oleidesulfovibrio</taxon>
    </lineage>
</organism>
<dbReference type="EC" id="1.1.1.25" evidence="1"/>
<dbReference type="EMBL" id="CP000112">
    <property type="protein sequence ID" value="ABB40357.1"/>
    <property type="molecule type" value="Genomic_DNA"/>
</dbReference>
<dbReference type="RefSeq" id="WP_011369247.1">
    <property type="nucleotide sequence ID" value="NC_007519.1"/>
</dbReference>
<dbReference type="SMR" id="Q30VD9"/>
<dbReference type="STRING" id="207559.Dde_3564"/>
<dbReference type="KEGG" id="dde:Dde_3564"/>
<dbReference type="eggNOG" id="COG0169">
    <property type="taxonomic scope" value="Bacteria"/>
</dbReference>
<dbReference type="HOGENOM" id="CLU_044063_0_1_7"/>
<dbReference type="UniPathway" id="UPA00053">
    <property type="reaction ID" value="UER00087"/>
</dbReference>
<dbReference type="Proteomes" id="UP000002710">
    <property type="component" value="Chromosome"/>
</dbReference>
<dbReference type="GO" id="GO:0005829">
    <property type="term" value="C:cytosol"/>
    <property type="evidence" value="ECO:0007669"/>
    <property type="project" value="TreeGrafter"/>
</dbReference>
<dbReference type="GO" id="GO:0050661">
    <property type="term" value="F:NADP binding"/>
    <property type="evidence" value="ECO:0007669"/>
    <property type="project" value="InterPro"/>
</dbReference>
<dbReference type="GO" id="GO:0004764">
    <property type="term" value="F:shikimate 3-dehydrogenase (NADP+) activity"/>
    <property type="evidence" value="ECO:0007669"/>
    <property type="project" value="UniProtKB-UniRule"/>
</dbReference>
<dbReference type="GO" id="GO:0008652">
    <property type="term" value="P:amino acid biosynthetic process"/>
    <property type="evidence" value="ECO:0007669"/>
    <property type="project" value="UniProtKB-KW"/>
</dbReference>
<dbReference type="GO" id="GO:0009073">
    <property type="term" value="P:aromatic amino acid family biosynthetic process"/>
    <property type="evidence" value="ECO:0007669"/>
    <property type="project" value="UniProtKB-KW"/>
</dbReference>
<dbReference type="GO" id="GO:0009423">
    <property type="term" value="P:chorismate biosynthetic process"/>
    <property type="evidence" value="ECO:0007669"/>
    <property type="project" value="UniProtKB-UniRule"/>
</dbReference>
<dbReference type="GO" id="GO:0019632">
    <property type="term" value="P:shikimate metabolic process"/>
    <property type="evidence" value="ECO:0007669"/>
    <property type="project" value="InterPro"/>
</dbReference>
<dbReference type="CDD" id="cd01065">
    <property type="entry name" value="NAD_bind_Shikimate_DH"/>
    <property type="match status" value="1"/>
</dbReference>
<dbReference type="Gene3D" id="3.40.50.10860">
    <property type="entry name" value="Leucine Dehydrogenase, chain A, domain 1"/>
    <property type="match status" value="1"/>
</dbReference>
<dbReference type="Gene3D" id="3.40.50.720">
    <property type="entry name" value="NAD(P)-binding Rossmann-like Domain"/>
    <property type="match status" value="1"/>
</dbReference>
<dbReference type="HAMAP" id="MF_00222">
    <property type="entry name" value="Shikimate_DH_AroE"/>
    <property type="match status" value="1"/>
</dbReference>
<dbReference type="InterPro" id="IPR046346">
    <property type="entry name" value="Aminoacid_DH-like_N_sf"/>
</dbReference>
<dbReference type="InterPro" id="IPR036291">
    <property type="entry name" value="NAD(P)-bd_dom_sf"/>
</dbReference>
<dbReference type="InterPro" id="IPR041121">
    <property type="entry name" value="SDH_C"/>
</dbReference>
<dbReference type="InterPro" id="IPR011342">
    <property type="entry name" value="Shikimate_DH"/>
</dbReference>
<dbReference type="InterPro" id="IPR013708">
    <property type="entry name" value="Shikimate_DH-bd_N"/>
</dbReference>
<dbReference type="InterPro" id="IPR022893">
    <property type="entry name" value="Shikimate_DH_fam"/>
</dbReference>
<dbReference type="InterPro" id="IPR006151">
    <property type="entry name" value="Shikm_DH/Glu-tRNA_Rdtase"/>
</dbReference>
<dbReference type="NCBIfam" id="TIGR00507">
    <property type="entry name" value="aroE"/>
    <property type="match status" value="1"/>
</dbReference>
<dbReference type="PANTHER" id="PTHR21089:SF1">
    <property type="entry name" value="BIFUNCTIONAL 3-DEHYDROQUINATE DEHYDRATASE_SHIKIMATE DEHYDROGENASE, CHLOROPLASTIC"/>
    <property type="match status" value="1"/>
</dbReference>
<dbReference type="PANTHER" id="PTHR21089">
    <property type="entry name" value="SHIKIMATE DEHYDROGENASE"/>
    <property type="match status" value="1"/>
</dbReference>
<dbReference type="Pfam" id="PF18317">
    <property type="entry name" value="SDH_C"/>
    <property type="match status" value="1"/>
</dbReference>
<dbReference type="Pfam" id="PF01488">
    <property type="entry name" value="Shikimate_DH"/>
    <property type="match status" value="1"/>
</dbReference>
<dbReference type="Pfam" id="PF08501">
    <property type="entry name" value="Shikimate_dh_N"/>
    <property type="match status" value="1"/>
</dbReference>
<dbReference type="SUPFAM" id="SSF53223">
    <property type="entry name" value="Aminoacid dehydrogenase-like, N-terminal domain"/>
    <property type="match status" value="1"/>
</dbReference>
<dbReference type="SUPFAM" id="SSF51735">
    <property type="entry name" value="NAD(P)-binding Rossmann-fold domains"/>
    <property type="match status" value="1"/>
</dbReference>
<evidence type="ECO:0000255" key="1">
    <source>
        <dbReference type="HAMAP-Rule" id="MF_00222"/>
    </source>
</evidence>
<keyword id="KW-0028">Amino-acid biosynthesis</keyword>
<keyword id="KW-0057">Aromatic amino acid biosynthesis</keyword>
<keyword id="KW-0521">NADP</keyword>
<keyword id="KW-0560">Oxidoreductase</keyword>
<keyword id="KW-1185">Reference proteome</keyword>
<feature type="chain" id="PRO_1000021280" description="Shikimate dehydrogenase (NADP(+))">
    <location>
        <begin position="1"/>
        <end position="279"/>
    </location>
</feature>
<feature type="active site" description="Proton acceptor" evidence="1">
    <location>
        <position position="72"/>
    </location>
</feature>
<feature type="binding site" evidence="1">
    <location>
        <begin position="21"/>
        <end position="23"/>
    </location>
    <ligand>
        <name>shikimate</name>
        <dbReference type="ChEBI" id="CHEBI:36208"/>
    </ligand>
</feature>
<feature type="binding site" evidence="1">
    <location>
        <position position="68"/>
    </location>
    <ligand>
        <name>shikimate</name>
        <dbReference type="ChEBI" id="CHEBI:36208"/>
    </ligand>
</feature>
<feature type="binding site" evidence="1">
    <location>
        <position position="93"/>
    </location>
    <ligand>
        <name>shikimate</name>
        <dbReference type="ChEBI" id="CHEBI:36208"/>
    </ligand>
</feature>
<feature type="binding site" evidence="1">
    <location>
        <position position="108"/>
    </location>
    <ligand>
        <name>shikimate</name>
        <dbReference type="ChEBI" id="CHEBI:36208"/>
    </ligand>
</feature>
<feature type="binding site" evidence="1">
    <location>
        <begin position="130"/>
        <end position="134"/>
    </location>
    <ligand>
        <name>NADP(+)</name>
        <dbReference type="ChEBI" id="CHEBI:58349"/>
    </ligand>
</feature>
<feature type="binding site" evidence="1">
    <location>
        <position position="219"/>
    </location>
    <ligand>
        <name>NADP(+)</name>
        <dbReference type="ChEBI" id="CHEBI:58349"/>
    </ligand>
</feature>
<feature type="binding site" evidence="1">
    <location>
        <position position="221"/>
    </location>
    <ligand>
        <name>shikimate</name>
        <dbReference type="ChEBI" id="CHEBI:36208"/>
    </ligand>
</feature>
<feature type="binding site" evidence="1">
    <location>
        <position position="242"/>
    </location>
    <ligand>
        <name>NADP(+)</name>
        <dbReference type="ChEBI" id="CHEBI:58349"/>
    </ligand>
</feature>
<sequence>MTIPRIPRQLYGIIGYPLGHSMSPLLHNWGFELLGEQAAYMAFPVAPEKLAEFICCARMLPVSGLSVTIPHKQAVMPLLDAVTPRAQAAGAVNTLFYDDGKLTGDNTDVYGFLHPLDSCGTAHAAALVLGAGGAANAVLAALTARGMCNVTVTNRNGDRARILAERFGVRCVAWEERHAVDADLVVNTTPLGMAGDRQAQTPLDPAFFSSRPAGLAYDLIYNPAQTFFLASAQAAGWRVLNGLDMFVAQGAEQFRIWRGRELPFAQARALIADALASGC</sequence>
<gene>
    <name evidence="1" type="primary">aroE</name>
    <name type="ordered locus">Dde_3564</name>
</gene>
<comment type="function">
    <text evidence="1">Involved in the biosynthesis of the chorismate, which leads to the biosynthesis of aromatic amino acids. Catalyzes the reversible NADPH linked reduction of 3-dehydroshikimate (DHSA) to yield shikimate (SA).</text>
</comment>
<comment type="catalytic activity">
    <reaction evidence="1">
        <text>shikimate + NADP(+) = 3-dehydroshikimate + NADPH + H(+)</text>
        <dbReference type="Rhea" id="RHEA:17737"/>
        <dbReference type="ChEBI" id="CHEBI:15378"/>
        <dbReference type="ChEBI" id="CHEBI:16630"/>
        <dbReference type="ChEBI" id="CHEBI:36208"/>
        <dbReference type="ChEBI" id="CHEBI:57783"/>
        <dbReference type="ChEBI" id="CHEBI:58349"/>
        <dbReference type="EC" id="1.1.1.25"/>
    </reaction>
</comment>
<comment type="pathway">
    <text evidence="1">Metabolic intermediate biosynthesis; chorismate biosynthesis; chorismate from D-erythrose 4-phosphate and phosphoenolpyruvate: step 4/7.</text>
</comment>
<comment type="subunit">
    <text evidence="1">Homodimer.</text>
</comment>
<comment type="similarity">
    <text evidence="1">Belongs to the shikimate dehydrogenase family.</text>
</comment>
<name>AROE_OLEA2</name>
<protein>
    <recommendedName>
        <fullName evidence="1">Shikimate dehydrogenase (NADP(+))</fullName>
        <shortName evidence="1">SDH</shortName>
        <ecNumber evidence="1">1.1.1.25</ecNumber>
    </recommendedName>
</protein>